<accession>P25686</accession>
<accession>A8K9P6</accession>
<accession>Q53QD7</accession>
<accession>Q8IUK1</accession>
<accession>Q8IUK2</accession>
<accession>Q96F52</accession>
<proteinExistence type="evidence at protein level"/>
<name>DNJB2_HUMAN</name>
<protein>
    <recommendedName>
        <fullName evidence="22">DnaJ homolog subfamily B member 2</fullName>
    </recommendedName>
    <alternativeName>
        <fullName evidence="25">Heat shock 40 kDa protein 3</fullName>
    </alternativeName>
    <alternativeName>
        <fullName evidence="20">Heat shock protein J1</fullName>
        <shortName evidence="20">HSJ-1</shortName>
    </alternativeName>
</protein>
<dbReference type="EMBL" id="S37375">
    <property type="protein sequence ID" value="AAA09034.1"/>
    <property type="molecule type" value="mRNA"/>
</dbReference>
<dbReference type="EMBL" id="S37374">
    <property type="protein sequence ID" value="AAA09035.1"/>
    <property type="status" value="ALT_FRAME"/>
    <property type="molecule type" value="mRNA"/>
</dbReference>
<dbReference type="EMBL" id="X63368">
    <property type="protein sequence ID" value="CAA44968.2"/>
    <property type="molecule type" value="Genomic_DNA"/>
</dbReference>
<dbReference type="EMBL" id="X63368">
    <property type="protein sequence ID" value="CAA44969.2"/>
    <property type="molecule type" value="Genomic_DNA"/>
</dbReference>
<dbReference type="EMBL" id="BT007088">
    <property type="protein sequence ID" value="AAP35751.1"/>
    <property type="molecule type" value="mRNA"/>
</dbReference>
<dbReference type="EMBL" id="AK292761">
    <property type="protein sequence ID" value="BAF85450.1"/>
    <property type="molecule type" value="mRNA"/>
</dbReference>
<dbReference type="EMBL" id="AK312723">
    <property type="protein sequence ID" value="BAG35597.1"/>
    <property type="molecule type" value="mRNA"/>
</dbReference>
<dbReference type="EMBL" id="AC114803">
    <property type="protein sequence ID" value="AAY24037.1"/>
    <property type="molecule type" value="Genomic_DNA"/>
</dbReference>
<dbReference type="EMBL" id="CH471063">
    <property type="protein sequence ID" value="EAW70722.1"/>
    <property type="molecule type" value="Genomic_DNA"/>
</dbReference>
<dbReference type="EMBL" id="BC011609">
    <property type="protein sequence ID" value="AAH11609.1"/>
    <property type="molecule type" value="mRNA"/>
</dbReference>
<dbReference type="EMBL" id="BC047056">
    <property type="protein sequence ID" value="AAH47056.1"/>
    <property type="molecule type" value="mRNA"/>
</dbReference>
<dbReference type="CCDS" id="CCDS2439.1">
    <molecule id="P25686-3"/>
</dbReference>
<dbReference type="CCDS" id="CCDS46519.1">
    <molecule id="P25686-2"/>
</dbReference>
<dbReference type="PIR" id="S23508">
    <property type="entry name" value="S23508"/>
</dbReference>
<dbReference type="RefSeq" id="NP_001034639.1">
    <molecule id="P25686-2"/>
    <property type="nucleotide sequence ID" value="NM_001039550.2"/>
</dbReference>
<dbReference type="RefSeq" id="NP_006727.2">
    <molecule id="P25686-3"/>
    <property type="nucleotide sequence ID" value="NM_006736.5"/>
</dbReference>
<dbReference type="PDB" id="2LGW">
    <property type="method" value="NMR"/>
    <property type="chains" value="A=1-91"/>
</dbReference>
<dbReference type="PDBsum" id="2LGW"/>
<dbReference type="BMRB" id="P25686"/>
<dbReference type="SMR" id="P25686"/>
<dbReference type="BioGRID" id="109533">
    <property type="interactions" value="123"/>
</dbReference>
<dbReference type="CORUM" id="P25686"/>
<dbReference type="DIP" id="DIP-29051N"/>
<dbReference type="FunCoup" id="P25686">
    <property type="interactions" value="1988"/>
</dbReference>
<dbReference type="IntAct" id="P25686">
    <property type="interactions" value="63"/>
</dbReference>
<dbReference type="MINT" id="P25686"/>
<dbReference type="STRING" id="9606.ENSP00000338019"/>
<dbReference type="GlyCosmos" id="P25686">
    <property type="glycosylation" value="1 site, 1 glycan"/>
</dbReference>
<dbReference type="GlyGen" id="P25686">
    <property type="glycosylation" value="1 site, 1 O-linked glycan (1 site)"/>
</dbReference>
<dbReference type="iPTMnet" id="P25686"/>
<dbReference type="PhosphoSitePlus" id="P25686"/>
<dbReference type="BioMuta" id="DNAJB2"/>
<dbReference type="DMDM" id="158518384"/>
<dbReference type="jPOST" id="P25686"/>
<dbReference type="MassIVE" id="P25686"/>
<dbReference type="PaxDb" id="9606-ENSP00000338019"/>
<dbReference type="PeptideAtlas" id="P25686"/>
<dbReference type="ProteomicsDB" id="54281">
    <molecule id="P25686-3"/>
</dbReference>
<dbReference type="ProteomicsDB" id="54282">
    <molecule id="P25686-2"/>
</dbReference>
<dbReference type="Pumba" id="P25686"/>
<dbReference type="Antibodypedia" id="34321">
    <property type="antibodies" value="363 antibodies from 32 providers"/>
</dbReference>
<dbReference type="DNASU" id="3300"/>
<dbReference type="Ensembl" id="ENST00000336576.10">
    <molecule id="P25686-3"/>
    <property type="protein sequence ID" value="ENSP00000338019.5"/>
    <property type="gene ID" value="ENSG00000135924.17"/>
</dbReference>
<dbReference type="Ensembl" id="ENST00000392086.8">
    <molecule id="P25686-2"/>
    <property type="protein sequence ID" value="ENSP00000375936.4"/>
    <property type="gene ID" value="ENSG00000135924.17"/>
</dbReference>
<dbReference type="GeneID" id="3300"/>
<dbReference type="KEGG" id="hsa:3300"/>
<dbReference type="MANE-Select" id="ENST00000336576.10">
    <property type="protein sequence ID" value="ENSP00000338019.5"/>
    <property type="RefSeq nucleotide sequence ID" value="NM_006736.6"/>
    <property type="RefSeq protein sequence ID" value="NP_006727.2"/>
</dbReference>
<dbReference type="UCSC" id="uc002vkw.2">
    <molecule id="P25686-3"/>
    <property type="organism name" value="human"/>
</dbReference>
<dbReference type="UCSC" id="uc002vkx.2">
    <property type="organism name" value="human"/>
</dbReference>
<dbReference type="AGR" id="HGNC:5228"/>
<dbReference type="CTD" id="3300"/>
<dbReference type="DisGeNET" id="3300"/>
<dbReference type="GeneCards" id="DNAJB2"/>
<dbReference type="HGNC" id="HGNC:5228">
    <property type="gene designation" value="DNAJB2"/>
</dbReference>
<dbReference type="HPA" id="ENSG00000135924">
    <property type="expression patterns" value="Tissue enhanced (brain)"/>
</dbReference>
<dbReference type="MalaCards" id="DNAJB2"/>
<dbReference type="MIM" id="604139">
    <property type="type" value="gene"/>
</dbReference>
<dbReference type="MIM" id="614881">
    <property type="type" value="phenotype"/>
</dbReference>
<dbReference type="neXtProt" id="NX_P25686"/>
<dbReference type="OpenTargets" id="ENSG00000135924"/>
<dbReference type="Orphanet" id="443950">
    <property type="disease" value="DNAJB2-related Charcot-Marie-Tooth disease type 2"/>
</dbReference>
<dbReference type="Orphanet" id="314485">
    <property type="disease" value="Young adult-onset distal hereditary motor neuropathy"/>
</dbReference>
<dbReference type="PharmGKB" id="PA27415"/>
<dbReference type="VEuPathDB" id="HostDB:ENSG00000135924"/>
<dbReference type="eggNOG" id="KOG0714">
    <property type="taxonomic scope" value="Eukaryota"/>
</dbReference>
<dbReference type="GeneTree" id="ENSGT00940000160220"/>
<dbReference type="InParanoid" id="P25686"/>
<dbReference type="OMA" id="HHRAGVF"/>
<dbReference type="OrthoDB" id="10250354at2759"/>
<dbReference type="PAN-GO" id="P25686">
    <property type="GO annotations" value="10 GO annotations based on evolutionary models"/>
</dbReference>
<dbReference type="PhylomeDB" id="P25686"/>
<dbReference type="TreeFam" id="TF105142"/>
<dbReference type="PathwayCommons" id="P25686"/>
<dbReference type="SignaLink" id="P25686"/>
<dbReference type="BioGRID-ORCS" id="3300">
    <property type="hits" value="24 hits in 1158 CRISPR screens"/>
</dbReference>
<dbReference type="CD-CODE" id="FB4E32DD">
    <property type="entry name" value="Presynaptic clusters and postsynaptic densities"/>
</dbReference>
<dbReference type="ChiTaRS" id="DNAJB2">
    <property type="organism name" value="human"/>
</dbReference>
<dbReference type="EvolutionaryTrace" id="P25686"/>
<dbReference type="GeneWiki" id="DNAJB2"/>
<dbReference type="GenomeRNAi" id="3300"/>
<dbReference type="Pharos" id="P25686">
    <property type="development level" value="Tbio"/>
</dbReference>
<dbReference type="PRO" id="PR:P25686"/>
<dbReference type="Proteomes" id="UP000005640">
    <property type="component" value="Chromosome 2"/>
</dbReference>
<dbReference type="RNAct" id="P25686">
    <property type="molecule type" value="protein"/>
</dbReference>
<dbReference type="Bgee" id="ENSG00000135924">
    <property type="expression patterns" value="Expressed in C1 segment of cervical spinal cord and 201 other cell types or tissues"/>
</dbReference>
<dbReference type="ExpressionAtlas" id="P25686">
    <property type="expression patterns" value="baseline and differential"/>
</dbReference>
<dbReference type="GO" id="GO:0005737">
    <property type="term" value="C:cytoplasm"/>
    <property type="evidence" value="ECO:0000314"/>
    <property type="project" value="UniProtKB"/>
</dbReference>
<dbReference type="GO" id="GO:0098554">
    <property type="term" value="C:cytoplasmic side of endoplasmic reticulum membrane"/>
    <property type="evidence" value="ECO:0000304"/>
    <property type="project" value="ARUK-UCL"/>
</dbReference>
<dbReference type="GO" id="GO:0005829">
    <property type="term" value="C:cytosol"/>
    <property type="evidence" value="ECO:0000314"/>
    <property type="project" value="UniProtKB"/>
</dbReference>
<dbReference type="GO" id="GO:0005789">
    <property type="term" value="C:endoplasmic reticulum membrane"/>
    <property type="evidence" value="ECO:0000314"/>
    <property type="project" value="UniProtKB"/>
</dbReference>
<dbReference type="GO" id="GO:0016234">
    <property type="term" value="C:inclusion body"/>
    <property type="evidence" value="ECO:0000314"/>
    <property type="project" value="BHF-UCL"/>
</dbReference>
<dbReference type="GO" id="GO:0031965">
    <property type="term" value="C:nuclear membrane"/>
    <property type="evidence" value="ECO:0000314"/>
    <property type="project" value="HPA"/>
</dbReference>
<dbReference type="GO" id="GO:0005634">
    <property type="term" value="C:nucleus"/>
    <property type="evidence" value="ECO:0000314"/>
    <property type="project" value="UniProtKB"/>
</dbReference>
<dbReference type="GO" id="GO:0048471">
    <property type="term" value="C:perinuclear region of cytoplasm"/>
    <property type="evidence" value="ECO:0000314"/>
    <property type="project" value="ARUK-UCL"/>
</dbReference>
<dbReference type="GO" id="GO:0000502">
    <property type="term" value="C:proteasome complex"/>
    <property type="evidence" value="ECO:0000314"/>
    <property type="project" value="BHF-UCL"/>
</dbReference>
<dbReference type="GO" id="GO:0001671">
    <property type="term" value="F:ATPase activator activity"/>
    <property type="evidence" value="ECO:0000314"/>
    <property type="project" value="UniProtKB"/>
</dbReference>
<dbReference type="GO" id="GO:0030544">
    <property type="term" value="F:Hsp70 protein binding"/>
    <property type="evidence" value="ECO:0000314"/>
    <property type="project" value="UniProtKB"/>
</dbReference>
<dbReference type="GO" id="GO:0031593">
    <property type="term" value="F:polyubiquitin modification-dependent protein binding"/>
    <property type="evidence" value="ECO:0000314"/>
    <property type="project" value="UniProtKB"/>
</dbReference>
<dbReference type="GO" id="GO:0070628">
    <property type="term" value="F:proteasome binding"/>
    <property type="evidence" value="ECO:0000314"/>
    <property type="project" value="BHF-UCL"/>
</dbReference>
<dbReference type="GO" id="GO:0120283">
    <property type="term" value="F:protein serine/threonine kinase binding"/>
    <property type="evidence" value="ECO:0000353"/>
    <property type="project" value="ARUK-UCL"/>
</dbReference>
<dbReference type="GO" id="GO:0140318">
    <property type="term" value="F:protein transporter activity"/>
    <property type="evidence" value="ECO:0000304"/>
    <property type="project" value="ARUK-UCL"/>
</dbReference>
<dbReference type="GO" id="GO:0051087">
    <property type="term" value="F:protein-folding chaperone binding"/>
    <property type="evidence" value="ECO:0000353"/>
    <property type="project" value="UniProtKB"/>
</dbReference>
<dbReference type="GO" id="GO:0043130">
    <property type="term" value="F:ubiquitin binding"/>
    <property type="evidence" value="ECO:0000314"/>
    <property type="project" value="ARUK-UCL"/>
</dbReference>
<dbReference type="GO" id="GO:0031625">
    <property type="term" value="F:ubiquitin protein ligase binding"/>
    <property type="evidence" value="ECO:0000353"/>
    <property type="project" value="ParkinsonsUK-UCL"/>
</dbReference>
<dbReference type="GO" id="GO:0140036">
    <property type="term" value="F:ubiquitin-modified protein reader activity"/>
    <property type="evidence" value="ECO:0000314"/>
    <property type="project" value="ARUK-UCL"/>
</dbReference>
<dbReference type="GO" id="GO:0051082">
    <property type="term" value="F:unfolded protein binding"/>
    <property type="evidence" value="ECO:0000314"/>
    <property type="project" value="UniProtKB"/>
</dbReference>
<dbReference type="GO" id="GO:0061077">
    <property type="term" value="P:chaperone-mediated protein folding"/>
    <property type="evidence" value="ECO:0000315"/>
    <property type="project" value="UniProtKB"/>
</dbReference>
<dbReference type="GO" id="GO:0036503">
    <property type="term" value="P:ERAD pathway"/>
    <property type="evidence" value="ECO:0000314"/>
    <property type="project" value="BHF-UCL"/>
</dbReference>
<dbReference type="GO" id="GO:0030308">
    <property type="term" value="P:negative regulation of cell growth"/>
    <property type="evidence" value="ECO:0000316"/>
    <property type="project" value="UniProtKB"/>
</dbReference>
<dbReference type="GO" id="GO:0008285">
    <property type="term" value="P:negative regulation of cell population proliferation"/>
    <property type="evidence" value="ECO:0000316"/>
    <property type="project" value="UniProtKB"/>
</dbReference>
<dbReference type="GO" id="GO:0090084">
    <property type="term" value="P:negative regulation of inclusion body assembly"/>
    <property type="evidence" value="ECO:0000314"/>
    <property type="project" value="BHF-UCL"/>
</dbReference>
<dbReference type="GO" id="GO:0032091">
    <property type="term" value="P:negative regulation of protein binding"/>
    <property type="evidence" value="ECO:0000314"/>
    <property type="project" value="UniProtKB"/>
</dbReference>
<dbReference type="GO" id="GO:0090086">
    <property type="term" value="P:negative regulation of protein deubiquitination"/>
    <property type="evidence" value="ECO:0000314"/>
    <property type="project" value="BHF-UCL"/>
</dbReference>
<dbReference type="GO" id="GO:0070050">
    <property type="term" value="P:neuron cellular homeostasis"/>
    <property type="evidence" value="ECO:0000304"/>
    <property type="project" value="ARUK-UCL"/>
</dbReference>
<dbReference type="GO" id="GO:0032781">
    <property type="term" value="P:positive regulation of ATP-dependent activity"/>
    <property type="evidence" value="ECO:0000314"/>
    <property type="project" value="UniProtKB"/>
</dbReference>
<dbReference type="GO" id="GO:0032436">
    <property type="term" value="P:positive regulation of proteasomal ubiquitin-dependent protein catabolic process"/>
    <property type="evidence" value="ECO:0000314"/>
    <property type="project" value="BHF-UCL"/>
</dbReference>
<dbReference type="GO" id="GO:0031398">
    <property type="term" value="P:positive regulation of protein ubiquitination"/>
    <property type="evidence" value="ECO:0000314"/>
    <property type="project" value="BHF-UCL"/>
</dbReference>
<dbReference type="GO" id="GO:0043161">
    <property type="term" value="P:proteasome-mediated ubiquitin-dependent protein catabolic process"/>
    <property type="evidence" value="ECO:0000315"/>
    <property type="project" value="UniProtKB"/>
</dbReference>
<dbReference type="GO" id="GO:0042026">
    <property type="term" value="P:protein refolding"/>
    <property type="evidence" value="ECO:0000314"/>
    <property type="project" value="UniProtKB"/>
</dbReference>
<dbReference type="GO" id="GO:1903644">
    <property type="term" value="P:regulation of chaperone-mediated protein folding"/>
    <property type="evidence" value="ECO:0000314"/>
    <property type="project" value="UniProtKB"/>
</dbReference>
<dbReference type="GO" id="GO:0032880">
    <property type="term" value="P:regulation of protein localization"/>
    <property type="evidence" value="ECO:0000315"/>
    <property type="project" value="ParkinsonsUK-UCL"/>
</dbReference>
<dbReference type="GO" id="GO:0031396">
    <property type="term" value="P:regulation of protein ubiquitination"/>
    <property type="evidence" value="ECO:0000315"/>
    <property type="project" value="UniProtKB"/>
</dbReference>
<dbReference type="GO" id="GO:0006986">
    <property type="term" value="P:response to unfolded protein"/>
    <property type="evidence" value="ECO:0000304"/>
    <property type="project" value="ProtInc"/>
</dbReference>
<dbReference type="CDD" id="cd06257">
    <property type="entry name" value="DnaJ"/>
    <property type="match status" value="1"/>
</dbReference>
<dbReference type="FunFam" id="1.10.287.110:FF:000021">
    <property type="entry name" value="DnaJ (Hsp40) homolog, subfamily B, member 2"/>
    <property type="match status" value="1"/>
</dbReference>
<dbReference type="Gene3D" id="6.10.140.100">
    <property type="match status" value="1"/>
</dbReference>
<dbReference type="Gene3D" id="1.10.287.110">
    <property type="entry name" value="DnaJ domain"/>
    <property type="match status" value="1"/>
</dbReference>
<dbReference type="InterPro" id="IPR001623">
    <property type="entry name" value="DnaJ_domain"/>
</dbReference>
<dbReference type="InterPro" id="IPR018253">
    <property type="entry name" value="DnaJ_domain_CS"/>
</dbReference>
<dbReference type="InterPro" id="IPR043183">
    <property type="entry name" value="DNJB2/6-like"/>
</dbReference>
<dbReference type="InterPro" id="IPR036869">
    <property type="entry name" value="J_dom_sf"/>
</dbReference>
<dbReference type="InterPro" id="IPR003903">
    <property type="entry name" value="UIM_dom"/>
</dbReference>
<dbReference type="PANTHER" id="PTHR45168">
    <property type="entry name" value="DNAJ HOMOLOG SUBFAMILY B MEMBER 2"/>
    <property type="match status" value="1"/>
</dbReference>
<dbReference type="PANTHER" id="PTHR45168:SF1">
    <property type="entry name" value="DNAJ HOMOLOG SUBFAMILY B MEMBER 2"/>
    <property type="match status" value="1"/>
</dbReference>
<dbReference type="Pfam" id="PF00226">
    <property type="entry name" value="DnaJ"/>
    <property type="match status" value="1"/>
</dbReference>
<dbReference type="PRINTS" id="PR00625">
    <property type="entry name" value="JDOMAIN"/>
</dbReference>
<dbReference type="SMART" id="SM00271">
    <property type="entry name" value="DnaJ"/>
    <property type="match status" value="1"/>
</dbReference>
<dbReference type="SMART" id="SM00726">
    <property type="entry name" value="UIM"/>
    <property type="match status" value="2"/>
</dbReference>
<dbReference type="SUPFAM" id="SSF46565">
    <property type="entry name" value="Chaperone J-domain"/>
    <property type="match status" value="1"/>
</dbReference>
<dbReference type="PROSITE" id="PS00636">
    <property type="entry name" value="DNAJ_1"/>
    <property type="match status" value="1"/>
</dbReference>
<dbReference type="PROSITE" id="PS50076">
    <property type="entry name" value="DNAJ_2"/>
    <property type="match status" value="1"/>
</dbReference>
<dbReference type="PROSITE" id="PS50330">
    <property type="entry name" value="UIM"/>
    <property type="match status" value="1"/>
</dbReference>
<reference key="1">
    <citation type="journal article" date="1992" name="Biochem. J.">
        <title>Human homologues of the bacterial heat-shock protein DnaJ are preferentially expressed in neurons.</title>
        <authorList>
            <person name="Cheetham M.E."/>
            <person name="Brion J.-P."/>
            <person name="Anderton B.H."/>
        </authorList>
    </citation>
    <scope>NUCLEOTIDE SEQUENCE [GENOMIC DNA / MRNA] (ISOFORMS 1 AND 2)</scope>
    <scope>TISSUE SPECIFICITY</scope>
    <source>
        <tissue>Brain</tissue>
    </source>
</reference>
<reference key="2">
    <citation type="submission" date="1998-07" db="UniProtKB">
        <authorList>
            <person name="Cheetham M.E."/>
        </authorList>
    </citation>
    <scope>SEQUENCE REVISION TO 214</scope>
</reference>
<reference key="3">
    <citation type="submission" date="2003-05" db="EMBL/GenBank/DDBJ databases">
        <title>Cloning of human full-length CDSs in BD Creator(TM) system donor vector.</title>
        <authorList>
            <person name="Kalnine N."/>
            <person name="Chen X."/>
            <person name="Rolfs A."/>
            <person name="Halleck A."/>
            <person name="Hines L."/>
            <person name="Eisenstein S."/>
            <person name="Koundinya M."/>
            <person name="Raphael J."/>
            <person name="Moreira D."/>
            <person name="Kelley T."/>
            <person name="LaBaer J."/>
            <person name="Lin Y."/>
            <person name="Phelan M."/>
            <person name="Farmer A."/>
        </authorList>
    </citation>
    <scope>NUCLEOTIDE SEQUENCE [LARGE SCALE MRNA] (ISOFORM 1)</scope>
</reference>
<reference key="4">
    <citation type="journal article" date="2004" name="Nat. Genet.">
        <title>Complete sequencing and characterization of 21,243 full-length human cDNAs.</title>
        <authorList>
            <person name="Ota T."/>
            <person name="Suzuki Y."/>
            <person name="Nishikawa T."/>
            <person name="Otsuki T."/>
            <person name="Sugiyama T."/>
            <person name="Irie R."/>
            <person name="Wakamatsu A."/>
            <person name="Hayashi K."/>
            <person name="Sato H."/>
            <person name="Nagai K."/>
            <person name="Kimura K."/>
            <person name="Makita H."/>
            <person name="Sekine M."/>
            <person name="Obayashi M."/>
            <person name="Nishi T."/>
            <person name="Shibahara T."/>
            <person name="Tanaka T."/>
            <person name="Ishii S."/>
            <person name="Yamamoto J."/>
            <person name="Saito K."/>
            <person name="Kawai Y."/>
            <person name="Isono Y."/>
            <person name="Nakamura Y."/>
            <person name="Nagahari K."/>
            <person name="Murakami K."/>
            <person name="Yasuda T."/>
            <person name="Iwayanagi T."/>
            <person name="Wagatsuma M."/>
            <person name="Shiratori A."/>
            <person name="Sudo H."/>
            <person name="Hosoiri T."/>
            <person name="Kaku Y."/>
            <person name="Kodaira H."/>
            <person name="Kondo H."/>
            <person name="Sugawara M."/>
            <person name="Takahashi M."/>
            <person name="Kanda K."/>
            <person name="Yokoi T."/>
            <person name="Furuya T."/>
            <person name="Kikkawa E."/>
            <person name="Omura Y."/>
            <person name="Abe K."/>
            <person name="Kamihara K."/>
            <person name="Katsuta N."/>
            <person name="Sato K."/>
            <person name="Tanikawa M."/>
            <person name="Yamazaki M."/>
            <person name="Ninomiya K."/>
            <person name="Ishibashi T."/>
            <person name="Yamashita H."/>
            <person name="Murakawa K."/>
            <person name="Fujimori K."/>
            <person name="Tanai H."/>
            <person name="Kimata M."/>
            <person name="Watanabe M."/>
            <person name="Hiraoka S."/>
            <person name="Chiba Y."/>
            <person name="Ishida S."/>
            <person name="Ono Y."/>
            <person name="Takiguchi S."/>
            <person name="Watanabe S."/>
            <person name="Yosida M."/>
            <person name="Hotuta T."/>
            <person name="Kusano J."/>
            <person name="Kanehori K."/>
            <person name="Takahashi-Fujii A."/>
            <person name="Hara H."/>
            <person name="Tanase T.-O."/>
            <person name="Nomura Y."/>
            <person name="Togiya S."/>
            <person name="Komai F."/>
            <person name="Hara R."/>
            <person name="Takeuchi K."/>
            <person name="Arita M."/>
            <person name="Imose N."/>
            <person name="Musashino K."/>
            <person name="Yuuki H."/>
            <person name="Oshima A."/>
            <person name="Sasaki N."/>
            <person name="Aotsuka S."/>
            <person name="Yoshikawa Y."/>
            <person name="Matsunawa H."/>
            <person name="Ichihara T."/>
            <person name="Shiohata N."/>
            <person name="Sano S."/>
            <person name="Moriya S."/>
            <person name="Momiyama H."/>
            <person name="Satoh N."/>
            <person name="Takami S."/>
            <person name="Terashima Y."/>
            <person name="Suzuki O."/>
            <person name="Nakagawa S."/>
            <person name="Senoh A."/>
            <person name="Mizoguchi H."/>
            <person name="Goto Y."/>
            <person name="Shimizu F."/>
            <person name="Wakebe H."/>
            <person name="Hishigaki H."/>
            <person name="Watanabe T."/>
            <person name="Sugiyama A."/>
            <person name="Takemoto M."/>
            <person name="Kawakami B."/>
            <person name="Yamazaki M."/>
            <person name="Watanabe K."/>
            <person name="Kumagai A."/>
            <person name="Itakura S."/>
            <person name="Fukuzumi Y."/>
            <person name="Fujimori Y."/>
            <person name="Komiyama M."/>
            <person name="Tashiro H."/>
            <person name="Tanigami A."/>
            <person name="Fujiwara T."/>
            <person name="Ono T."/>
            <person name="Yamada K."/>
            <person name="Fujii Y."/>
            <person name="Ozaki K."/>
            <person name="Hirao M."/>
            <person name="Ohmori Y."/>
            <person name="Kawabata A."/>
            <person name="Hikiji T."/>
            <person name="Kobatake N."/>
            <person name="Inagaki H."/>
            <person name="Ikema Y."/>
            <person name="Okamoto S."/>
            <person name="Okitani R."/>
            <person name="Kawakami T."/>
            <person name="Noguchi S."/>
            <person name="Itoh T."/>
            <person name="Shigeta K."/>
            <person name="Senba T."/>
            <person name="Matsumura K."/>
            <person name="Nakajima Y."/>
            <person name="Mizuno T."/>
            <person name="Morinaga M."/>
            <person name="Sasaki M."/>
            <person name="Togashi T."/>
            <person name="Oyama M."/>
            <person name="Hata H."/>
            <person name="Watanabe M."/>
            <person name="Komatsu T."/>
            <person name="Mizushima-Sugano J."/>
            <person name="Satoh T."/>
            <person name="Shirai Y."/>
            <person name="Takahashi Y."/>
            <person name="Nakagawa K."/>
            <person name="Okumura K."/>
            <person name="Nagase T."/>
            <person name="Nomura N."/>
            <person name="Kikuchi H."/>
            <person name="Masuho Y."/>
            <person name="Yamashita R."/>
            <person name="Nakai K."/>
            <person name="Yada T."/>
            <person name="Nakamura Y."/>
            <person name="Ohara O."/>
            <person name="Isogai T."/>
            <person name="Sugano S."/>
        </authorList>
    </citation>
    <scope>NUCLEOTIDE SEQUENCE [LARGE SCALE MRNA] (ISOFORM 2)</scope>
    <source>
        <tissue>Brain</tissue>
        <tissue>Lung</tissue>
    </source>
</reference>
<reference key="5">
    <citation type="journal article" date="2005" name="Nature">
        <title>Generation and annotation of the DNA sequences of human chromosomes 2 and 4.</title>
        <authorList>
            <person name="Hillier L.W."/>
            <person name="Graves T.A."/>
            <person name="Fulton R.S."/>
            <person name="Fulton L.A."/>
            <person name="Pepin K.H."/>
            <person name="Minx P."/>
            <person name="Wagner-McPherson C."/>
            <person name="Layman D."/>
            <person name="Wylie K."/>
            <person name="Sekhon M."/>
            <person name="Becker M.C."/>
            <person name="Fewell G.A."/>
            <person name="Delehaunty K.D."/>
            <person name="Miner T.L."/>
            <person name="Nash W.E."/>
            <person name="Kremitzki C."/>
            <person name="Oddy L."/>
            <person name="Du H."/>
            <person name="Sun H."/>
            <person name="Bradshaw-Cordum H."/>
            <person name="Ali J."/>
            <person name="Carter J."/>
            <person name="Cordes M."/>
            <person name="Harris A."/>
            <person name="Isak A."/>
            <person name="van Brunt A."/>
            <person name="Nguyen C."/>
            <person name="Du F."/>
            <person name="Courtney L."/>
            <person name="Kalicki J."/>
            <person name="Ozersky P."/>
            <person name="Abbott S."/>
            <person name="Armstrong J."/>
            <person name="Belter E.A."/>
            <person name="Caruso L."/>
            <person name="Cedroni M."/>
            <person name="Cotton M."/>
            <person name="Davidson T."/>
            <person name="Desai A."/>
            <person name="Elliott G."/>
            <person name="Erb T."/>
            <person name="Fronick C."/>
            <person name="Gaige T."/>
            <person name="Haakenson W."/>
            <person name="Haglund K."/>
            <person name="Holmes A."/>
            <person name="Harkins R."/>
            <person name="Kim K."/>
            <person name="Kruchowski S.S."/>
            <person name="Strong C.M."/>
            <person name="Grewal N."/>
            <person name="Goyea E."/>
            <person name="Hou S."/>
            <person name="Levy A."/>
            <person name="Martinka S."/>
            <person name="Mead K."/>
            <person name="McLellan M.D."/>
            <person name="Meyer R."/>
            <person name="Randall-Maher J."/>
            <person name="Tomlinson C."/>
            <person name="Dauphin-Kohlberg S."/>
            <person name="Kozlowicz-Reilly A."/>
            <person name="Shah N."/>
            <person name="Swearengen-Shahid S."/>
            <person name="Snider J."/>
            <person name="Strong J.T."/>
            <person name="Thompson J."/>
            <person name="Yoakum M."/>
            <person name="Leonard S."/>
            <person name="Pearman C."/>
            <person name="Trani L."/>
            <person name="Radionenko M."/>
            <person name="Waligorski J.E."/>
            <person name="Wang C."/>
            <person name="Rock S.M."/>
            <person name="Tin-Wollam A.-M."/>
            <person name="Maupin R."/>
            <person name="Latreille P."/>
            <person name="Wendl M.C."/>
            <person name="Yang S.-P."/>
            <person name="Pohl C."/>
            <person name="Wallis J.W."/>
            <person name="Spieth J."/>
            <person name="Bieri T.A."/>
            <person name="Berkowicz N."/>
            <person name="Nelson J.O."/>
            <person name="Osborne J."/>
            <person name="Ding L."/>
            <person name="Meyer R."/>
            <person name="Sabo A."/>
            <person name="Shotland Y."/>
            <person name="Sinha P."/>
            <person name="Wohldmann P.E."/>
            <person name="Cook L.L."/>
            <person name="Hickenbotham M.T."/>
            <person name="Eldred J."/>
            <person name="Williams D."/>
            <person name="Jones T.A."/>
            <person name="She X."/>
            <person name="Ciccarelli F.D."/>
            <person name="Izaurralde E."/>
            <person name="Taylor J."/>
            <person name="Schmutz J."/>
            <person name="Myers R.M."/>
            <person name="Cox D.R."/>
            <person name="Huang X."/>
            <person name="McPherson J.D."/>
            <person name="Mardis E.R."/>
            <person name="Clifton S.W."/>
            <person name="Warren W.C."/>
            <person name="Chinwalla A.T."/>
            <person name="Eddy S.R."/>
            <person name="Marra M.A."/>
            <person name="Ovcharenko I."/>
            <person name="Furey T.S."/>
            <person name="Miller W."/>
            <person name="Eichler E.E."/>
            <person name="Bork P."/>
            <person name="Suyama M."/>
            <person name="Torrents D."/>
            <person name="Waterston R.H."/>
            <person name="Wilson R.K."/>
        </authorList>
    </citation>
    <scope>NUCLEOTIDE SEQUENCE [LARGE SCALE GENOMIC DNA]</scope>
</reference>
<reference key="6">
    <citation type="submission" date="2005-07" db="EMBL/GenBank/DDBJ databases">
        <authorList>
            <person name="Mural R.J."/>
            <person name="Istrail S."/>
            <person name="Sutton G.G."/>
            <person name="Florea L."/>
            <person name="Halpern A.L."/>
            <person name="Mobarry C.M."/>
            <person name="Lippert R."/>
            <person name="Walenz B."/>
            <person name="Shatkay H."/>
            <person name="Dew I."/>
            <person name="Miller J.R."/>
            <person name="Flanigan M.J."/>
            <person name="Edwards N.J."/>
            <person name="Bolanos R."/>
            <person name="Fasulo D."/>
            <person name="Halldorsson B.V."/>
            <person name="Hannenhalli S."/>
            <person name="Turner R."/>
            <person name="Yooseph S."/>
            <person name="Lu F."/>
            <person name="Nusskern D.R."/>
            <person name="Shue B.C."/>
            <person name="Zheng X.H."/>
            <person name="Zhong F."/>
            <person name="Delcher A.L."/>
            <person name="Huson D.H."/>
            <person name="Kravitz S.A."/>
            <person name="Mouchard L."/>
            <person name="Reinert K."/>
            <person name="Remington K.A."/>
            <person name="Clark A.G."/>
            <person name="Waterman M.S."/>
            <person name="Eichler E.E."/>
            <person name="Adams M.D."/>
            <person name="Hunkapiller M.W."/>
            <person name="Myers E.W."/>
            <person name="Venter J.C."/>
        </authorList>
    </citation>
    <scope>NUCLEOTIDE SEQUENCE [LARGE SCALE GENOMIC DNA]</scope>
</reference>
<reference key="7">
    <citation type="journal article" date="2004" name="Genome Res.">
        <title>The status, quality, and expansion of the NIH full-length cDNA project: the Mammalian Gene Collection (MGC).</title>
        <authorList>
            <consortium name="The MGC Project Team"/>
        </authorList>
    </citation>
    <scope>NUCLEOTIDE SEQUENCE [LARGE SCALE MRNA] (ISOFORMS 1 AND 2)</scope>
    <source>
        <tissue>Colon</tissue>
        <tissue>Lymph</tissue>
    </source>
</reference>
<reference key="8">
    <citation type="journal article" date="1994" name="Eur. J. Biochem.">
        <title>Regulation of 70-kDa heat-shock-protein ATPase activity and substrate binding by human DnaJ-like proteins, HSJ1a and HSJ1b.</title>
        <authorList>
            <person name="Cheetham M.E."/>
            <person name="Jackson A.P."/>
            <person name="Anderton B.H."/>
        </authorList>
    </citation>
    <scope>FUNCTION</scope>
</reference>
<reference key="9">
    <citation type="journal article" date="2003" name="J. Biol. Chem.">
        <title>The chaperone environment at the cytoplasmic face of the endoplasmic reticulum can modulate rhodopsin processing and inclusion formation.</title>
        <authorList>
            <person name="Chapple J.P."/>
            <person name="Cheetham M.E."/>
        </authorList>
    </citation>
    <scope>FUNCTION</scope>
    <scope>SUBCELLULAR LOCATION (ISOFORMS 1 AND 2)</scope>
    <scope>TOPOLOGY (ISOFORM 1)</scope>
    <scope>TISSUE SPECIFICITY (ISOFORMS 1 AND 2)</scope>
    <scope>MUTAGENESIS OF HIS-31; CYS-321 AND LEU-324</scope>
    <scope>ISOPRENYLATION AT CYS-321</scope>
    <scope>METHYLATION AT CYS-321</scope>
    <scope>MOTIF</scope>
</reference>
<reference key="10">
    <citation type="journal article" date="2005" name="Curr. Biol.">
        <title>HSJ1 is a neuronal shuttling factor for the sorting of chaperone clients to the proteasome.</title>
        <authorList>
            <person name="Westhoff B."/>
            <person name="Chapple J.P."/>
            <person name="van der Spuy J."/>
            <person name="Hoehfeld J."/>
            <person name="Cheetham M.E."/>
        </authorList>
    </citation>
    <scope>FUNCTION</scope>
    <scope>INTERACTION WITH HSPA8 AND PSMA3</scope>
    <scope>UBIQUITINATION BY STUB1</scope>
    <scope>DOMAIN</scope>
    <scope>MUTAGENESIS OF 31-HIS--ASP-33; SER-219; GLU-222; SER-262 AND GLU-265</scope>
</reference>
<reference key="11">
    <citation type="journal article" date="2011" name="Hum. Mol. Genet.">
        <title>Molecular chaperone-mediated rescue of mitophagy by a Parkin RING1 domain mutant.</title>
        <authorList>
            <person name="Rose J.M."/>
            <person name="Novoselov S.S."/>
            <person name="Robinson P.A."/>
            <person name="Cheetham M.E."/>
        </authorList>
    </citation>
    <scope>FUNCTION</scope>
    <scope>DOMAIN</scope>
    <scope>MUTAGENESIS OF HIS-31</scope>
</reference>
<reference key="12">
    <citation type="journal article" date="2011" name="Mol. Endocrinol.">
        <title>The cytosolic chaperone Hsc70 promotes traffic to the cell surface of intracellular retained melanocortin-4 receptor mutants.</title>
        <authorList>
            <person name="Meimaridou E."/>
            <person name="Gooljar S.B."/>
            <person name="Ramnarace N."/>
            <person name="Anthonypillai L."/>
            <person name="Clark A.J."/>
            <person name="Chapple J.P."/>
        </authorList>
    </citation>
    <scope>FUNCTION</scope>
</reference>
<reference key="13">
    <citation type="journal article" date="2011" name="PLoS ONE">
        <title>Co-chaperone HSJ1a dually regulates the proteasomal degradation of ataxin-3.</title>
        <authorList>
            <person name="Gao X.C."/>
            <person name="Zhou C.J."/>
            <person name="Zhou Z.R."/>
            <person name="Zhang Y.H."/>
            <person name="Zheng X.M."/>
            <person name="Song A.X."/>
            <person name="Hu H.Y."/>
        </authorList>
    </citation>
    <scope>FUNCTION</scope>
    <scope>INTERACTION WITH HSP70</scope>
    <scope>SUBCELLULAR LOCATION</scope>
    <scope>DOMAIN</scope>
    <scope>MUTAGENESIS OF 31-HIS--ASP-33; SER-219; GLU-222; SER-262 AND GLU-265</scope>
</reference>
<reference key="14">
    <citation type="journal article" date="2012" name="Ann. Neurol.">
        <title>A rare recessive distal hereditary motor neuropathy with HSJ1 chaperone mutation.</title>
        <authorList>
            <person name="Blumen S.C."/>
            <person name="Astord S."/>
            <person name="Robin V."/>
            <person name="Vignaud L."/>
            <person name="Toumi N."/>
            <person name="Cieslik A."/>
            <person name="Achiron A."/>
            <person name="Carasso R.L."/>
            <person name="Gurevich M."/>
            <person name="Braverman I."/>
            <person name="Blumen N."/>
            <person name="Munich A."/>
            <person name="Barkats M."/>
            <person name="Viollet L."/>
        </authorList>
    </citation>
    <scope>INVOLVEMENT IN HMNR5</scope>
</reference>
<reference key="15">
    <citation type="journal article" date="2012" name="Brain">
        <title>Suppression of protein aggregation by chaperone modification of high molecular weight complexes.</title>
        <authorList>
            <person name="Labbadia J."/>
            <person name="Novoselov S.S."/>
            <person name="Bett J.S."/>
            <person name="Weiss A."/>
            <person name="Paganetti P."/>
            <person name="Bates G.P."/>
            <person name="Cheetham M.E."/>
        </authorList>
    </citation>
    <scope>FUNCTION</scope>
</reference>
<reference key="16">
    <citation type="journal article" date="2013" name="PLoS ONE">
        <title>Molecular chaperone mediated late-stage neuroprotection in the SOD1(G93A) mouse model of amyotrophic lateral sclerosis.</title>
        <authorList>
            <person name="Novoselov S.S."/>
            <person name="Mustill W.J."/>
            <person name="Gray A.L."/>
            <person name="Dick J.R."/>
            <person name="Kanuga N."/>
            <person name="Kalmar B."/>
            <person name="Greensmith L."/>
            <person name="Cheetham M.E."/>
        </authorList>
    </citation>
    <scope>FUNCTION</scope>
</reference>
<reference key="17">
    <citation type="journal article" date="2014" name="J. Neurol.">
        <title>Whole-exome sequencing in patients with inherited neuropathies: outcome and challenges.</title>
        <authorList>
            <person name="Schabhuettl M."/>
            <person name="Wieland T."/>
            <person name="Senderek J."/>
            <person name="Baets J."/>
            <person name="Timmerman V."/>
            <person name="De Jonghe P."/>
            <person name="Reilly M.M."/>
            <person name="Stieglbauer K."/>
            <person name="Laich E."/>
            <person name="Windhager R."/>
            <person name="Erwa W."/>
            <person name="Trajanoski S."/>
            <person name="Strom T.M."/>
            <person name="Auer-Grumbach M."/>
        </authorList>
    </citation>
    <scope>INVOLVEMENT IN HMNR5</scope>
    <scope>VARIANT HMNR5 CYS-5</scope>
</reference>
<reference key="18">
    <citation type="journal article" date="2014" name="Neurology">
        <title>HSJ1-related hereditary neuropathies: novel mutations and extended clinical spectrum.</title>
        <authorList>
            <person name="Gess B."/>
            <person name="Auer-Grumbach M."/>
            <person name="Schirmacher A."/>
            <person name="Strom T."/>
            <person name="Zitzelsberger M."/>
            <person name="Rudnik-Schoneborn S."/>
            <person name="Rohr D."/>
            <person name="Halfter H."/>
            <person name="Young P."/>
            <person name="Senderek J."/>
        </authorList>
    </citation>
    <scope>INVOLVEMENT IN HMNR5</scope>
    <scope>VARIANT HMNR5 CYS-5</scope>
</reference>
<reference key="19">
    <citation type="journal article" date="2012" name="J. Biol. Chem.">
        <title>The C-terminal helices of heat shock protein 70 are essential for J-domain binding and ATPase activation.</title>
        <authorList>
            <person name="Gao X.C."/>
            <person name="Zhou C.J."/>
            <person name="Zhou Z.R."/>
            <person name="Wu M."/>
            <person name="Cao C.Y."/>
            <person name="Hu H.Y."/>
        </authorList>
    </citation>
    <scope>STRUCTURE BY NMR OF 1-71</scope>
    <scope>FUNCTION</scope>
    <scope>INTERACTION WITH HSP70</scope>
    <scope>DOMAIN</scope>
</reference>
<evidence type="ECO:0000250" key="1">
    <source>
        <dbReference type="UniProtKB" id="Q9QYI5"/>
    </source>
</evidence>
<evidence type="ECO:0000255" key="2">
    <source>
        <dbReference type="PROSITE-ProRule" id="PRU00213"/>
    </source>
</evidence>
<evidence type="ECO:0000255" key="3">
    <source>
        <dbReference type="PROSITE-ProRule" id="PRU00286"/>
    </source>
</evidence>
<evidence type="ECO:0000256" key="4">
    <source>
        <dbReference type="SAM" id="MobiDB-lite"/>
    </source>
</evidence>
<evidence type="ECO:0000269" key="5">
    <source>
    </source>
</evidence>
<evidence type="ECO:0000269" key="6">
    <source>
    </source>
</evidence>
<evidence type="ECO:0000269" key="7">
    <source>
    </source>
</evidence>
<evidence type="ECO:0000269" key="8">
    <source>
    </source>
</evidence>
<evidence type="ECO:0000269" key="9">
    <source>
    </source>
</evidence>
<evidence type="ECO:0000269" key="10">
    <source>
    </source>
</evidence>
<evidence type="ECO:0000269" key="11">
    <source>
    </source>
</evidence>
<evidence type="ECO:0000269" key="12">
    <source>
    </source>
</evidence>
<evidence type="ECO:0000269" key="13">
    <source>
    </source>
</evidence>
<evidence type="ECO:0000269" key="14">
    <source>
    </source>
</evidence>
<evidence type="ECO:0000269" key="15">
    <source>
    </source>
</evidence>
<evidence type="ECO:0000269" key="16">
    <source>
    </source>
</evidence>
<evidence type="ECO:0000269" key="17">
    <source>
    </source>
</evidence>
<evidence type="ECO:0000303" key="18">
    <source>
    </source>
</evidence>
<evidence type="ECO:0000303" key="19">
    <source>
    </source>
</evidence>
<evidence type="ECO:0000303" key="20">
    <source>
    </source>
</evidence>
<evidence type="ECO:0000303" key="21">
    <source>
    </source>
</evidence>
<evidence type="ECO:0000305" key="22"/>
<evidence type="ECO:0000305" key="23">
    <source>
    </source>
</evidence>
<evidence type="ECO:0000312" key="24">
    <source>
        <dbReference type="HGNC" id="HGNC:5228"/>
    </source>
</evidence>
<evidence type="ECO:0000312" key="25">
    <source>
        <dbReference type="MIM" id="604139"/>
    </source>
</evidence>
<evidence type="ECO:0007829" key="26">
    <source>
        <dbReference type="PDB" id="2LGW"/>
    </source>
</evidence>
<organism>
    <name type="scientific">Homo sapiens</name>
    <name type="common">Human</name>
    <dbReference type="NCBI Taxonomy" id="9606"/>
    <lineage>
        <taxon>Eukaryota</taxon>
        <taxon>Metazoa</taxon>
        <taxon>Chordata</taxon>
        <taxon>Craniata</taxon>
        <taxon>Vertebrata</taxon>
        <taxon>Euteleostomi</taxon>
        <taxon>Mammalia</taxon>
        <taxon>Eutheria</taxon>
        <taxon>Euarchontoglires</taxon>
        <taxon>Primates</taxon>
        <taxon>Haplorrhini</taxon>
        <taxon>Catarrhini</taxon>
        <taxon>Hominidae</taxon>
        <taxon>Homo</taxon>
    </lineage>
</organism>
<keyword id="KW-0002">3D-structure</keyword>
<keyword id="KW-0007">Acetylation</keyword>
<keyword id="KW-0025">Alternative splicing</keyword>
<keyword id="KW-0143">Chaperone</keyword>
<keyword id="KW-0963">Cytoplasm</keyword>
<keyword id="KW-0256">Endoplasmic reticulum</keyword>
<keyword id="KW-0449">Lipoprotein</keyword>
<keyword id="KW-0472">Membrane</keyword>
<keyword id="KW-0488">Methylation</keyword>
<keyword id="KW-0523">Neurodegeneration</keyword>
<keyword id="KW-0622">Neuropathy</keyword>
<keyword id="KW-0539">Nucleus</keyword>
<keyword id="KW-0597">Phosphoprotein</keyword>
<keyword id="KW-0636">Prenylation</keyword>
<keyword id="KW-1267">Proteomics identification</keyword>
<keyword id="KW-1185">Reference proteome</keyword>
<keyword id="KW-0677">Repeat</keyword>
<keyword id="KW-0832">Ubl conjugation</keyword>
<feature type="initiator methionine" description="Removed" evidence="1">
    <location>
        <position position="1"/>
    </location>
</feature>
<feature type="chain" id="PRO_0000071018" description="DnaJ homolog subfamily B member 2">
    <location>
        <begin position="2"/>
        <end position="321"/>
    </location>
</feature>
<feature type="propeptide" id="PRO_0000438687" description="Removed in mature form" evidence="23">
    <location>
        <begin position="322"/>
        <end position="324"/>
    </location>
</feature>
<feature type="domain" description="J" evidence="3">
    <location>
        <begin position="2"/>
        <end position="71"/>
    </location>
</feature>
<feature type="domain" description="UIM 1" evidence="2">
    <location>
        <begin position="210"/>
        <end position="226"/>
    </location>
</feature>
<feature type="domain" description="UIM 2" evidence="2">
    <location>
        <begin position="250"/>
        <end position="269"/>
    </location>
</feature>
<feature type="region of interest" description="Disordered" evidence="4">
    <location>
        <begin position="70"/>
        <end position="90"/>
    </location>
</feature>
<feature type="region of interest" description="Disordered" evidence="4">
    <location>
        <begin position="218"/>
        <end position="324"/>
    </location>
</feature>
<feature type="short sequence motif" description="CAAX motif" evidence="5">
    <location>
        <begin position="321"/>
        <end position="324"/>
    </location>
</feature>
<feature type="compositionally biased region" description="Polar residues" evidence="4">
    <location>
        <begin position="224"/>
        <end position="241"/>
    </location>
</feature>
<feature type="compositionally biased region" description="Basic residues" evidence="4">
    <location>
        <begin position="280"/>
        <end position="289"/>
    </location>
</feature>
<feature type="compositionally biased region" description="Basic and acidic residues" evidence="4">
    <location>
        <begin position="303"/>
        <end position="324"/>
    </location>
</feature>
<feature type="modified residue" description="N-acetylalanine" evidence="1">
    <location>
        <position position="2"/>
    </location>
</feature>
<feature type="modified residue" description="Phosphoserine" evidence="1">
    <location>
        <position position="311"/>
    </location>
</feature>
<feature type="modified residue" description="Cysteine methyl ester" evidence="23">
    <location>
        <position position="321"/>
    </location>
</feature>
<feature type="lipid moiety-binding region" description="S-geranylgeranyl cysteine" evidence="5">
    <location>
        <position position="321"/>
    </location>
</feature>
<feature type="splice variant" id="VSP_001286" description="In isoform 2." evidence="18 19">
    <original>GGR</original>
    <variation>DVF</variation>
    <location>
        <begin position="275"/>
        <end position="277"/>
    </location>
</feature>
<feature type="splice variant" id="VSP_001287" description="In isoform 2." evidence="18 19">
    <location>
        <begin position="278"/>
        <end position="324"/>
    </location>
</feature>
<feature type="sequence variant" id="VAR_073286" description="In HMNR5; dbSNP:rs730882140." evidence="15 16">
    <original>Y</original>
    <variation>C</variation>
    <location>
        <position position="5"/>
    </location>
</feature>
<feature type="sequence variant" id="VAR_048910" description="In dbSNP:rs34127289.">
    <original>G</original>
    <variation>R</variation>
    <location>
        <position position="270"/>
    </location>
</feature>
<feature type="mutagenesis site" description="Loss of interaction with HSP70 and loss of the ability to promote ATXN3 proteasomal degradation." evidence="9">
    <original>HPD</original>
    <variation>QPN</variation>
    <location>
        <begin position="31"/>
        <end position="33"/>
    </location>
</feature>
<feature type="mutagenesis site" description="Probable loss of interaction with HSP70 and loss of the ability to reduce PRKN aggregation." evidence="5 8">
    <original>H</original>
    <variation>Q</variation>
    <location>
        <position position="31"/>
    </location>
</feature>
<feature type="mutagenesis site" description="Loss of interaction with polyubiquitin chains, loss of interaction with PSMA3, and loss of the ability to protect ATXN3 from proteasomal degradation; when associated with A-222; A-262 and A-265." evidence="6 9">
    <original>S</original>
    <variation>A</variation>
    <location>
        <position position="219"/>
    </location>
</feature>
<feature type="mutagenesis site" description="Loss of interaction with polyubiquitin chains, loss of interaction with PSMA3, and loss of the ability to protect ATXN3 from proteasomal degradation; when associated with A-219; A-262 and A-265." evidence="6 9">
    <original>E</original>
    <variation>A</variation>
    <location>
        <position position="222"/>
    </location>
</feature>
<feature type="mutagenesis site" description="Loss of interaction with polyubiquitin chains, loss of interaction with PSMA3, and loss of the ability to protect ATXN3 from proteasomal degradation; when associated with A-219; A-222 and A-265." evidence="6 9">
    <original>S</original>
    <variation>A</variation>
    <location>
        <position position="262"/>
    </location>
</feature>
<feature type="mutagenesis site" description="Loss of interaction with polyubiquitin chains, loss of interaction with PSMA3, and loss of the ability to protect ATXN3 from proteasomal degradation; when associated with A-219; A-222 and A-262." evidence="6 9">
    <original>E</original>
    <variation>A</variation>
    <location>
        <position position="265"/>
    </location>
</feature>
<feature type="mutagenesis site" description="Loss of localization to the endoplasmic reticulum and relocalization to cytoplasm and nucleus." evidence="5">
    <original>C</original>
    <variation>S</variation>
    <location>
        <position position="321"/>
    </location>
</feature>
<feature type="mutagenesis site" description="No effect on localization to the endoplasmic reticulum membrane." evidence="5">
    <original>L</original>
    <variation>M</variation>
    <location>
        <position position="324"/>
    </location>
</feature>
<feature type="sequence conflict" description="In Ref. 1; AAA09034/AAA09035." evidence="22" ref="1">
    <original>L</original>
    <variation>R</variation>
    <location>
        <position position="214"/>
    </location>
</feature>
<feature type="helix" evidence="26">
    <location>
        <begin position="4"/>
        <end position="7"/>
    </location>
</feature>
<feature type="strand" evidence="26">
    <location>
        <begin position="8"/>
        <end position="10"/>
    </location>
</feature>
<feature type="helix" evidence="26">
    <location>
        <begin position="16"/>
        <end position="29"/>
    </location>
</feature>
<feature type="turn" evidence="26">
    <location>
        <begin position="32"/>
        <end position="34"/>
    </location>
</feature>
<feature type="helix" evidence="26">
    <location>
        <begin position="40"/>
        <end position="57"/>
    </location>
</feature>
<feature type="helix" evidence="26">
    <location>
        <begin position="59"/>
        <end position="70"/>
    </location>
</feature>
<sequence length="324" mass="35580">MASYYEILDVPRSASADDIKKAYRRKALQWHPDKNPDNKEFAEKKFKEVAEAYEVLSDKHKREIYDRYGREGLTGTGTGPSRAEAGSGGPGFTFTFRSPEEVFREFFGSGDPFAELFDDLGPFSELQNRGSRHSGPFFTFSSSFPGHSDFSSSSFSFSPGAGAFRSVSTSTTFVQGRRITTRRIMENGQERVEVEEDGQLKSVTINGVPDDLALGLELSRREQQPSVTSRSGGTQVQQTPASCPLDSDLSEDEDLQLAMAYSLSEMEAAGKKPAGGREAQHRRQGRPKAQHQDPGLGGTQEGARGEATKRSPSPEEKASRCLIL</sequence>
<comment type="function">
    <text evidence="5 6 8 9 10 11 12 14 17">Functions as a co-chaperone, regulating the substrate binding and activating the ATPase activity of chaperones of the HSP70/heat shock protein 70 family (PubMed:22219199, PubMed:7957263). In parallel, also contributes to the ubiquitin-dependent proteasomal degradation of misfolded proteins (PubMed:15936278, PubMed:21625540). Thereby, may regulate the aggregation and promote the functional recovery of misfolded proteins like HTT, MC4R, PRKN, RHO and SOD1 and be crucial for many biological processes (PubMed:12754272, PubMed:20889486, PubMed:21719532, PubMed:22396390, PubMed:24023695). Isoform 1 which is localized to the endoplasmic reticulum membranes may specifically function in ER-associated protein degradation of misfolded proteins (PubMed:15936278).</text>
</comment>
<comment type="subunit">
    <text evidence="6 9 11">Interacts with HSP70 (HSPA1A or HSPA1B) (PubMed:21625540, PubMed:22219199). Interacts with HSPA8/Hsc70 (PubMed:15936278). Interacts with PSMA3 and most probably with the whole proteasomal complex (PubMed:15936278).</text>
</comment>
<comment type="interaction">
    <interactant intactId="EBI-6166532">
        <id>P25686</id>
    </interactant>
    <interactant intactId="EBI-721328">
        <id>P58340</id>
        <label>MLF1</label>
    </interactant>
    <organismsDiffer>false</organismsDiffer>
    <experiments>2</experiments>
</comment>
<comment type="subcellular location">
    <molecule>Isoform 2</molecule>
    <subcellularLocation>
        <location evidence="5 9">Cytoplasm</location>
    </subcellularLocation>
    <subcellularLocation>
        <location evidence="5">Nucleus</location>
    </subcellularLocation>
</comment>
<comment type="subcellular location">
    <molecule>Isoform 1</molecule>
    <subcellularLocation>
        <location evidence="5">Endoplasmic reticulum membrane</location>
        <topology evidence="5">Lipid-anchor</topology>
        <orientation evidence="5">Cytoplasmic side</orientation>
    </subcellularLocation>
</comment>
<comment type="alternative products">
    <event type="alternative splicing"/>
    <isoform>
        <id>P25686-3</id>
        <name>1</name>
        <name evidence="20">HSJ1b</name>
        <sequence type="displayed"/>
    </isoform>
    <isoform>
        <id>P25686-2</id>
        <name>2</name>
        <name evidence="20">HSJ1a</name>
        <name evidence="21">DNAJB2a</name>
        <sequence type="described" ref="VSP_001286 VSP_001287"/>
    </isoform>
</comment>
<comment type="tissue specificity">
    <text evidence="5 7">More abundantly expressed in neocortex, cerebellum, spinal cord and retina where it is expressed by neuronal cells (at protein level) (PubMed:12754272, PubMed:1599432). Detected at much lower level in non-neuronal tissues including kidney, lung, heart, skeletal muscle, spleen and testis (at protein level) (PubMed:12754272, PubMed:1599432). Isoform 1 is more abundant in neocortex and cerebellum compared to isoform 2 (at protein level) (PubMed:12754272).</text>
</comment>
<comment type="domain">
    <text evidence="8 9 11">The J domain is sufficient to interact with HSP70 (HSPA1A or HSPA1B) and activate its ATPase activity (PubMed:22219199). The J domain is also required for the HSP70-mediated and ubiquitin-dependent proteasomal degradation of proteins like ATXN3 (PubMed:21625540). The J domain is required to reduce PRKN cytoplasmic aggregation (PubMed:20889486).</text>
</comment>
<comment type="domain">
    <text evidence="6 8 9">The UIM domains mediate interaction with ubiquitinated chaperone clients and with the proteasome (PubMed:15936278). The UIM domains may have an opposite activity to the J domain, binding ubiquitinated proteins and protecting them from HSP70-mediated proteasomal degradation (PubMed:21625540). The UIM domains are not required to reduce PRKN cytoplasmic aggregation (PubMed:20889486).</text>
</comment>
<comment type="PTM">
    <text evidence="6">Ubiquitinated by STUB1; does not lead to proteasomal degradation.</text>
</comment>
<comment type="disease" evidence="13 15 16">
    <disease id="DI-03602">
        <name>Neuronopathy, distal hereditary motor, autosomal recessive 5</name>
        <acronym>HMNR5</acronym>
        <description>A form of distal hereditary motor neuronopathy, a heterogeneous group of neuromuscular disorders caused by selective degeneration of motor neurons in the anterior horn of the spinal cord, without sensory deficit in the posterior horn. The overall clinical picture consists of a classical distal muscular atrophy syndrome in the legs without clinical sensory loss. The disease starts with weakness and wasting of distal muscles of the anterior tibial and peroneal compartments of the legs. Later on, weakness and atrophy may expand to the proximal muscles of the lower limbs and/or to the distal upper limbs. HMNR5 is characterized by young adult onset of slowly progressive distal muscle weakness and atrophy resulting in gait impairment and loss of reflexes.</description>
        <dbReference type="MIM" id="614881"/>
    </disease>
    <text>The disease is caused by variants affecting the gene represented in this entry.</text>
</comment>
<comment type="sequence caution" evidence="22">
    <conflict type="frameshift">
        <sequence resource="EMBL-CDS" id="AAA09035"/>
    </conflict>
</comment>
<gene>
    <name evidence="24" type="primary">DNAJB2</name>
    <name evidence="20" type="synonym">HSJ1</name>
    <name evidence="25" type="synonym">HSPF3</name>
</gene>